<evidence type="ECO:0000255" key="1">
    <source>
        <dbReference type="HAMAP-Rule" id="MF_00126"/>
    </source>
</evidence>
<comment type="catalytic activity">
    <reaction evidence="1">
        <text>tRNA(Gln) + L-glutamine + ATP = L-glutaminyl-tRNA(Gln) + AMP + diphosphate</text>
        <dbReference type="Rhea" id="RHEA:20121"/>
        <dbReference type="Rhea" id="RHEA-COMP:9662"/>
        <dbReference type="Rhea" id="RHEA-COMP:9681"/>
        <dbReference type="ChEBI" id="CHEBI:30616"/>
        <dbReference type="ChEBI" id="CHEBI:33019"/>
        <dbReference type="ChEBI" id="CHEBI:58359"/>
        <dbReference type="ChEBI" id="CHEBI:78442"/>
        <dbReference type="ChEBI" id="CHEBI:78521"/>
        <dbReference type="ChEBI" id="CHEBI:456215"/>
        <dbReference type="EC" id="6.1.1.18"/>
    </reaction>
</comment>
<comment type="subunit">
    <text evidence="1">Monomer.</text>
</comment>
<comment type="subcellular location">
    <subcellularLocation>
        <location evidence="1">Cytoplasm</location>
    </subcellularLocation>
</comment>
<comment type="similarity">
    <text evidence="1">Belongs to the class-I aminoacyl-tRNA synthetase family.</text>
</comment>
<proteinExistence type="inferred from homology"/>
<protein>
    <recommendedName>
        <fullName evidence="1">Glutamine--tRNA ligase</fullName>
        <ecNumber evidence="1">6.1.1.18</ecNumber>
    </recommendedName>
    <alternativeName>
        <fullName evidence="1">Glutaminyl-tRNA synthetase</fullName>
        <shortName evidence="1">GlnRS</shortName>
    </alternativeName>
</protein>
<reference key="1">
    <citation type="journal article" date="2009" name="PLoS ONE">
        <title>Salmonella paratyphi C: genetic divergence from Salmonella choleraesuis and pathogenic convergence with Salmonella typhi.</title>
        <authorList>
            <person name="Liu W.-Q."/>
            <person name="Feng Y."/>
            <person name="Wang Y."/>
            <person name="Zou Q.-H."/>
            <person name="Chen F."/>
            <person name="Guo J.-T."/>
            <person name="Peng Y.-H."/>
            <person name="Jin Y."/>
            <person name="Li Y.-G."/>
            <person name="Hu S.-N."/>
            <person name="Johnston R.N."/>
            <person name="Liu G.-R."/>
            <person name="Liu S.-L."/>
        </authorList>
    </citation>
    <scope>NUCLEOTIDE SEQUENCE [LARGE SCALE GENOMIC DNA]</scope>
    <source>
        <strain>RKS4594</strain>
    </source>
</reference>
<feature type="chain" id="PRO_1000199103" description="Glutamine--tRNA ligase">
    <location>
        <begin position="1"/>
        <end position="555"/>
    </location>
</feature>
<feature type="region of interest" description="Interaction with tRNA" evidence="1">
    <location>
        <begin position="317"/>
        <end position="324"/>
    </location>
</feature>
<feature type="short sequence motif" description="'HIGH' region" evidence="1">
    <location>
        <begin position="34"/>
        <end position="44"/>
    </location>
</feature>
<feature type="short sequence motif" description="'KMSKS' region" evidence="1">
    <location>
        <begin position="268"/>
        <end position="272"/>
    </location>
</feature>
<feature type="binding site" evidence="1">
    <location>
        <begin position="35"/>
        <end position="37"/>
    </location>
    <ligand>
        <name>ATP</name>
        <dbReference type="ChEBI" id="CHEBI:30616"/>
    </ligand>
</feature>
<feature type="binding site" evidence="1">
    <location>
        <begin position="41"/>
        <end position="47"/>
    </location>
    <ligand>
        <name>ATP</name>
        <dbReference type="ChEBI" id="CHEBI:30616"/>
    </ligand>
</feature>
<feature type="binding site" evidence="1">
    <location>
        <position position="67"/>
    </location>
    <ligand>
        <name>L-glutamine</name>
        <dbReference type="ChEBI" id="CHEBI:58359"/>
    </ligand>
</feature>
<feature type="binding site" evidence="1">
    <location>
        <position position="212"/>
    </location>
    <ligand>
        <name>L-glutamine</name>
        <dbReference type="ChEBI" id="CHEBI:58359"/>
    </ligand>
</feature>
<feature type="binding site" evidence="1">
    <location>
        <position position="231"/>
    </location>
    <ligand>
        <name>ATP</name>
        <dbReference type="ChEBI" id="CHEBI:30616"/>
    </ligand>
</feature>
<feature type="binding site" evidence="1">
    <location>
        <begin position="261"/>
        <end position="262"/>
    </location>
    <ligand>
        <name>ATP</name>
        <dbReference type="ChEBI" id="CHEBI:30616"/>
    </ligand>
</feature>
<feature type="binding site" evidence="1">
    <location>
        <begin position="269"/>
        <end position="271"/>
    </location>
    <ligand>
        <name>ATP</name>
        <dbReference type="ChEBI" id="CHEBI:30616"/>
    </ligand>
</feature>
<keyword id="KW-0030">Aminoacyl-tRNA synthetase</keyword>
<keyword id="KW-0067">ATP-binding</keyword>
<keyword id="KW-0963">Cytoplasm</keyword>
<keyword id="KW-0436">Ligase</keyword>
<keyword id="KW-0547">Nucleotide-binding</keyword>
<keyword id="KW-0648">Protein biosynthesis</keyword>
<accession>C0PWA7</accession>
<gene>
    <name evidence="1" type="primary">glnS</name>
    <name type="ordered locus">SPC_0695</name>
</gene>
<organism>
    <name type="scientific">Salmonella paratyphi C (strain RKS4594)</name>
    <dbReference type="NCBI Taxonomy" id="476213"/>
    <lineage>
        <taxon>Bacteria</taxon>
        <taxon>Pseudomonadati</taxon>
        <taxon>Pseudomonadota</taxon>
        <taxon>Gammaproteobacteria</taxon>
        <taxon>Enterobacterales</taxon>
        <taxon>Enterobacteriaceae</taxon>
        <taxon>Salmonella</taxon>
    </lineage>
</organism>
<name>SYQ_SALPC</name>
<dbReference type="EC" id="6.1.1.18" evidence="1"/>
<dbReference type="EMBL" id="CP000857">
    <property type="protein sequence ID" value="ACN44870.1"/>
    <property type="molecule type" value="Genomic_DNA"/>
</dbReference>
<dbReference type="RefSeq" id="WP_001287181.1">
    <property type="nucleotide sequence ID" value="NC_012125.1"/>
</dbReference>
<dbReference type="SMR" id="C0PWA7"/>
<dbReference type="KEGG" id="sei:SPC_0695"/>
<dbReference type="HOGENOM" id="CLU_001882_2_3_6"/>
<dbReference type="Proteomes" id="UP000001599">
    <property type="component" value="Chromosome"/>
</dbReference>
<dbReference type="GO" id="GO:0005829">
    <property type="term" value="C:cytosol"/>
    <property type="evidence" value="ECO:0007669"/>
    <property type="project" value="TreeGrafter"/>
</dbReference>
<dbReference type="GO" id="GO:0005524">
    <property type="term" value="F:ATP binding"/>
    <property type="evidence" value="ECO:0007669"/>
    <property type="project" value="UniProtKB-UniRule"/>
</dbReference>
<dbReference type="GO" id="GO:0004819">
    <property type="term" value="F:glutamine-tRNA ligase activity"/>
    <property type="evidence" value="ECO:0007669"/>
    <property type="project" value="UniProtKB-UniRule"/>
</dbReference>
<dbReference type="GO" id="GO:0006425">
    <property type="term" value="P:glutaminyl-tRNA aminoacylation"/>
    <property type="evidence" value="ECO:0007669"/>
    <property type="project" value="InterPro"/>
</dbReference>
<dbReference type="GO" id="GO:0006424">
    <property type="term" value="P:glutamyl-tRNA aminoacylation"/>
    <property type="evidence" value="ECO:0007669"/>
    <property type="project" value="UniProtKB-UniRule"/>
</dbReference>
<dbReference type="CDD" id="cd00807">
    <property type="entry name" value="GlnRS_core"/>
    <property type="match status" value="1"/>
</dbReference>
<dbReference type="FunFam" id="1.10.1160.10:FF:000001">
    <property type="entry name" value="Glutamine--tRNA ligase"/>
    <property type="match status" value="1"/>
</dbReference>
<dbReference type="FunFam" id="2.40.240.10:FF:000001">
    <property type="entry name" value="Glutamine--tRNA ligase"/>
    <property type="match status" value="1"/>
</dbReference>
<dbReference type="FunFam" id="2.40.240.10:FF:000003">
    <property type="entry name" value="Glutamine--tRNA ligase"/>
    <property type="match status" value="1"/>
</dbReference>
<dbReference type="FunFam" id="3.90.800.10:FF:000001">
    <property type="entry name" value="Glutamine--tRNA ligase"/>
    <property type="match status" value="1"/>
</dbReference>
<dbReference type="FunFam" id="3.40.50.620:FF:000037">
    <property type="entry name" value="Glutamine--tRNA ligase cytoplasmic"/>
    <property type="match status" value="1"/>
</dbReference>
<dbReference type="Gene3D" id="1.10.1160.10">
    <property type="entry name" value="Glutamyl-trna Synthetase, Domain 2"/>
    <property type="match status" value="1"/>
</dbReference>
<dbReference type="Gene3D" id="3.90.800.10">
    <property type="entry name" value="Glutamyl-tRNA Synthetase, Domain 3"/>
    <property type="match status" value="1"/>
</dbReference>
<dbReference type="Gene3D" id="3.40.50.620">
    <property type="entry name" value="HUPs"/>
    <property type="match status" value="1"/>
</dbReference>
<dbReference type="Gene3D" id="2.40.240.10">
    <property type="entry name" value="Ribosomal Protein L25, Chain P"/>
    <property type="match status" value="2"/>
</dbReference>
<dbReference type="HAMAP" id="MF_00126">
    <property type="entry name" value="Gln_tRNA_synth"/>
    <property type="match status" value="1"/>
</dbReference>
<dbReference type="InterPro" id="IPR001412">
    <property type="entry name" value="aa-tRNA-synth_I_CS"/>
</dbReference>
<dbReference type="InterPro" id="IPR004514">
    <property type="entry name" value="Gln-tRNA-synth"/>
</dbReference>
<dbReference type="InterPro" id="IPR050132">
    <property type="entry name" value="Gln/Glu-tRNA_Ligase"/>
</dbReference>
<dbReference type="InterPro" id="IPR022861">
    <property type="entry name" value="Gln_tRNA_ligase_bac"/>
</dbReference>
<dbReference type="InterPro" id="IPR000924">
    <property type="entry name" value="Glu/Gln-tRNA-synth"/>
</dbReference>
<dbReference type="InterPro" id="IPR020058">
    <property type="entry name" value="Glu/Gln-tRNA-synth_Ib_cat-dom"/>
</dbReference>
<dbReference type="InterPro" id="IPR020059">
    <property type="entry name" value="Glu/Gln-tRNA-synth_Ib_codon-bd"/>
</dbReference>
<dbReference type="InterPro" id="IPR020061">
    <property type="entry name" value="Glu_tRNA_lig_a-bdl"/>
</dbReference>
<dbReference type="InterPro" id="IPR020056">
    <property type="entry name" value="Rbsml_bL25/Gln-tRNA_synth_N"/>
</dbReference>
<dbReference type="InterPro" id="IPR011035">
    <property type="entry name" value="Ribosomal_bL25/Gln-tRNA_synth"/>
</dbReference>
<dbReference type="InterPro" id="IPR014729">
    <property type="entry name" value="Rossmann-like_a/b/a_fold"/>
</dbReference>
<dbReference type="InterPro" id="IPR049437">
    <property type="entry name" value="tRNA-synt_1c_C2"/>
</dbReference>
<dbReference type="NCBIfam" id="TIGR00440">
    <property type="entry name" value="glnS"/>
    <property type="match status" value="1"/>
</dbReference>
<dbReference type="NCBIfam" id="NF011291">
    <property type="entry name" value="PRK14703.1"/>
    <property type="match status" value="1"/>
</dbReference>
<dbReference type="PANTHER" id="PTHR43097:SF5">
    <property type="entry name" value="GLUTAMATE--TRNA LIGASE"/>
    <property type="match status" value="1"/>
</dbReference>
<dbReference type="PANTHER" id="PTHR43097">
    <property type="entry name" value="GLUTAMINE-TRNA LIGASE"/>
    <property type="match status" value="1"/>
</dbReference>
<dbReference type="Pfam" id="PF00749">
    <property type="entry name" value="tRNA-synt_1c"/>
    <property type="match status" value="1"/>
</dbReference>
<dbReference type="Pfam" id="PF03950">
    <property type="entry name" value="tRNA-synt_1c_C"/>
    <property type="match status" value="1"/>
</dbReference>
<dbReference type="Pfam" id="PF20974">
    <property type="entry name" value="tRNA-synt_1c_C2"/>
    <property type="match status" value="1"/>
</dbReference>
<dbReference type="PRINTS" id="PR00987">
    <property type="entry name" value="TRNASYNTHGLU"/>
</dbReference>
<dbReference type="SUPFAM" id="SSF52374">
    <property type="entry name" value="Nucleotidylyl transferase"/>
    <property type="match status" value="1"/>
</dbReference>
<dbReference type="SUPFAM" id="SSF50715">
    <property type="entry name" value="Ribosomal protein L25-like"/>
    <property type="match status" value="1"/>
</dbReference>
<dbReference type="PROSITE" id="PS00178">
    <property type="entry name" value="AA_TRNA_LIGASE_I"/>
    <property type="match status" value="1"/>
</dbReference>
<sequence length="555" mass="63538">MSEAEARPTNFIRQIIDEDLASGKHTTVHTRFPPEPNGYLHIGHAKSICLNFGIAQDYQGQCNLRFDDTNPVKEDIEYVDSIKNDVEWLGFHWSGDIRYSSDYFDQLHAYAVELINKGLAYVDELTPEQIREYRGTLTAPGKNSPFRDRSVEENLALFEKMRTGGFEEGKACLRAKIDMASPFIVMRDPVLYRIKFAEHHQTGNKWCIYPMYDFTHCISDALEGITHSLCTLEFQDNRRLYDWVLDNITIPVHPRQYEFSRLNLEYTVMSKRKLNLLVTDKHVEGWDDPRMPTISGLRRRGYTAASIREFCKRIGVTKQDNTIEMASLESCIREDLNENAPRAMAVIDPVKLVIENYPQGESEMVTMPNHPNKPEMGSREVPFSGEIWIDRADFREEANKQYKRLVMGKEVRLRNAYVIKAERVEKDAEGNITTIFCTYDADTLSKDPADGRKVKGVIHWVSAAHALPIEIRLYDRLFSVPNPGAAEDFLSVINPESLVIKQGYGEPSLKAAVAGKAFQFEREGYFCLDSRYATADKLVFNRTVGLRDTWAKAGE</sequence>